<protein>
    <recommendedName>
        <fullName evidence="2">D-alanine--D-alanine ligase</fullName>
        <ecNumber evidence="2">6.3.2.4</ecNumber>
    </recommendedName>
    <alternativeName>
        <fullName evidence="2">D-Ala-D-Ala ligase</fullName>
    </alternativeName>
    <alternativeName>
        <fullName evidence="2">D-alanylalanine synthetase</fullName>
    </alternativeName>
</protein>
<accession>P63892</accession>
<accession>Q99SH4</accession>
<keyword id="KW-0067">ATP-binding</keyword>
<keyword id="KW-0133">Cell shape</keyword>
<keyword id="KW-0961">Cell wall biogenesis/degradation</keyword>
<keyword id="KW-0963">Cytoplasm</keyword>
<keyword id="KW-0436">Ligase</keyword>
<keyword id="KW-0460">Magnesium</keyword>
<keyword id="KW-0464">Manganese</keyword>
<keyword id="KW-0479">Metal-binding</keyword>
<keyword id="KW-0547">Nucleotide-binding</keyword>
<keyword id="KW-0573">Peptidoglycan synthesis</keyword>
<comment type="function">
    <text evidence="2">Cell wall formation.</text>
</comment>
<comment type="catalytic activity">
    <reaction evidence="2">
        <text>2 D-alanine + ATP = D-alanyl-D-alanine + ADP + phosphate + H(+)</text>
        <dbReference type="Rhea" id="RHEA:11224"/>
        <dbReference type="ChEBI" id="CHEBI:15378"/>
        <dbReference type="ChEBI" id="CHEBI:30616"/>
        <dbReference type="ChEBI" id="CHEBI:43474"/>
        <dbReference type="ChEBI" id="CHEBI:57416"/>
        <dbReference type="ChEBI" id="CHEBI:57822"/>
        <dbReference type="ChEBI" id="CHEBI:456216"/>
        <dbReference type="EC" id="6.3.2.4"/>
    </reaction>
</comment>
<comment type="cofactor">
    <cofactor evidence="1">
        <name>Mg(2+)</name>
        <dbReference type="ChEBI" id="CHEBI:18420"/>
    </cofactor>
    <cofactor evidence="1">
        <name>Mn(2+)</name>
        <dbReference type="ChEBI" id="CHEBI:29035"/>
    </cofactor>
    <text evidence="1">Binds 2 magnesium or manganese ions per subunit.</text>
</comment>
<comment type="pathway">
    <text evidence="2">Cell wall biogenesis; peptidoglycan biosynthesis.</text>
</comment>
<comment type="subcellular location">
    <subcellularLocation>
        <location evidence="2">Cytoplasm</location>
    </subcellularLocation>
</comment>
<comment type="similarity">
    <text evidence="2">Belongs to the D-alanine--D-alanine ligase family.</text>
</comment>
<feature type="chain" id="PRO_0000177876" description="D-alanine--D-alanine ligase">
    <location>
        <begin position="1"/>
        <end position="356"/>
    </location>
</feature>
<feature type="domain" description="ATP-grasp" evidence="2">
    <location>
        <begin position="134"/>
        <end position="339"/>
    </location>
</feature>
<feature type="binding site" evidence="2">
    <location>
        <begin position="167"/>
        <end position="222"/>
    </location>
    <ligand>
        <name>ATP</name>
        <dbReference type="ChEBI" id="CHEBI:30616"/>
    </ligand>
</feature>
<feature type="binding site" evidence="2">
    <location>
        <position position="293"/>
    </location>
    <ligand>
        <name>Mg(2+)</name>
        <dbReference type="ChEBI" id="CHEBI:18420"/>
        <label>1</label>
    </ligand>
</feature>
<feature type="binding site" evidence="2">
    <location>
        <position position="306"/>
    </location>
    <ligand>
        <name>Mg(2+)</name>
        <dbReference type="ChEBI" id="CHEBI:18420"/>
        <label>1</label>
    </ligand>
</feature>
<feature type="binding site" evidence="2">
    <location>
        <position position="306"/>
    </location>
    <ligand>
        <name>Mg(2+)</name>
        <dbReference type="ChEBI" id="CHEBI:18420"/>
        <label>2</label>
    </ligand>
</feature>
<feature type="binding site" evidence="2">
    <location>
        <position position="308"/>
    </location>
    <ligand>
        <name>Mg(2+)</name>
        <dbReference type="ChEBI" id="CHEBI:18420"/>
        <label>2</label>
    </ligand>
</feature>
<organism>
    <name type="scientific">Staphylococcus aureus (strain N315)</name>
    <dbReference type="NCBI Taxonomy" id="158879"/>
    <lineage>
        <taxon>Bacteria</taxon>
        <taxon>Bacillati</taxon>
        <taxon>Bacillota</taxon>
        <taxon>Bacilli</taxon>
        <taxon>Bacillales</taxon>
        <taxon>Staphylococcaceae</taxon>
        <taxon>Staphylococcus</taxon>
    </lineage>
</organism>
<reference key="1">
    <citation type="journal article" date="2001" name="Lancet">
        <title>Whole genome sequencing of meticillin-resistant Staphylococcus aureus.</title>
        <authorList>
            <person name="Kuroda M."/>
            <person name="Ohta T."/>
            <person name="Uchiyama I."/>
            <person name="Baba T."/>
            <person name="Yuzawa H."/>
            <person name="Kobayashi I."/>
            <person name="Cui L."/>
            <person name="Oguchi A."/>
            <person name="Aoki K."/>
            <person name="Nagai Y."/>
            <person name="Lian J.-Q."/>
            <person name="Ito T."/>
            <person name="Kanamori M."/>
            <person name="Matsumaru H."/>
            <person name="Maruyama A."/>
            <person name="Murakami H."/>
            <person name="Hosoyama A."/>
            <person name="Mizutani-Ui Y."/>
            <person name="Takahashi N.K."/>
            <person name="Sawano T."/>
            <person name="Inoue R."/>
            <person name="Kaito C."/>
            <person name="Sekimizu K."/>
            <person name="Hirakawa H."/>
            <person name="Kuhara S."/>
            <person name="Goto S."/>
            <person name="Yabuzaki J."/>
            <person name="Kanehisa M."/>
            <person name="Yamashita A."/>
            <person name="Oshima K."/>
            <person name="Furuya K."/>
            <person name="Yoshino C."/>
            <person name="Shiba T."/>
            <person name="Hattori M."/>
            <person name="Ogasawara N."/>
            <person name="Hayashi H."/>
            <person name="Hiramatsu K."/>
        </authorList>
    </citation>
    <scope>NUCLEOTIDE SEQUENCE [LARGE SCALE GENOMIC DNA]</scope>
    <source>
        <strain>N315</strain>
    </source>
</reference>
<reference key="2">
    <citation type="submission" date="2007-10" db="UniProtKB">
        <title>Shotgun proteomic analysis of total and membrane protein extracts of S. aureus strain N315.</title>
        <authorList>
            <person name="Vaezzadeh A.R."/>
            <person name="Deshusses J."/>
            <person name="Lescuyer P."/>
            <person name="Hochstrasser D.F."/>
        </authorList>
    </citation>
    <scope>IDENTIFICATION BY MASS SPECTROMETRY [LARGE SCALE ANALYSIS]</scope>
    <source>
        <strain>N315</strain>
    </source>
</reference>
<proteinExistence type="evidence at protein level"/>
<sequence length="356" mass="40231">MTKENICIVFGGKSAEHEVSILTAQNVLNAIDKDKYHVDIIYITNDGDWRKQNNITAEIKSTDELHLENGEALEISQLLKESSSGQPYDAVFPLLHGPNGEDGTIQGLFEVLDVPYVGNGVLSAASSMDKLVMKQLFEHRGLPQLPYISFLRSEYEKYEHNILKLVNDKLNYPVFVKPANLGSSVGISKCNNEAELKEGIKEAFQFDRKLVIEQGVNAREIEVAVLGNDYPEATWPGEVVKDVAFYDYKSKYKDGKVQLQIPADLDEDVQLTLRNMALEAFKATDCSGLVRADFFVTEDNQIYINETNAMPGFTAFSMYPKLWENMGLSYPELITKLIELAKERHQDKQKNKYKID</sequence>
<gene>
    <name evidence="2" type="primary">ddl</name>
    <name type="synonym">ddlA</name>
    <name type="ordered locus">SA1887</name>
</gene>
<evidence type="ECO:0000250" key="1"/>
<evidence type="ECO:0000255" key="2">
    <source>
        <dbReference type="HAMAP-Rule" id="MF_00047"/>
    </source>
</evidence>
<dbReference type="EC" id="6.3.2.4" evidence="2"/>
<dbReference type="EMBL" id="BA000018">
    <property type="protein sequence ID" value="BAB43170.1"/>
    <property type="molecule type" value="Genomic_DNA"/>
</dbReference>
<dbReference type="PIR" id="A99901">
    <property type="entry name" value="A99901"/>
</dbReference>
<dbReference type="RefSeq" id="WP_000159631.1">
    <property type="nucleotide sequence ID" value="NC_002745.2"/>
</dbReference>
<dbReference type="SMR" id="P63892"/>
<dbReference type="EnsemblBacteria" id="BAB43170">
    <property type="protein sequence ID" value="BAB43170"/>
    <property type="gene ID" value="BAB43170"/>
</dbReference>
<dbReference type="KEGG" id="sau:SA1887"/>
<dbReference type="HOGENOM" id="CLU_039268_0_0_9"/>
<dbReference type="UniPathway" id="UPA00219"/>
<dbReference type="GO" id="GO:0005829">
    <property type="term" value="C:cytosol"/>
    <property type="evidence" value="ECO:0007669"/>
    <property type="project" value="TreeGrafter"/>
</dbReference>
<dbReference type="GO" id="GO:0005524">
    <property type="term" value="F:ATP binding"/>
    <property type="evidence" value="ECO:0007669"/>
    <property type="project" value="UniProtKB-KW"/>
</dbReference>
<dbReference type="GO" id="GO:0008716">
    <property type="term" value="F:D-alanine-D-alanine ligase activity"/>
    <property type="evidence" value="ECO:0007669"/>
    <property type="project" value="UniProtKB-UniRule"/>
</dbReference>
<dbReference type="GO" id="GO:0046872">
    <property type="term" value="F:metal ion binding"/>
    <property type="evidence" value="ECO:0007669"/>
    <property type="project" value="UniProtKB-KW"/>
</dbReference>
<dbReference type="GO" id="GO:0071555">
    <property type="term" value="P:cell wall organization"/>
    <property type="evidence" value="ECO:0007669"/>
    <property type="project" value="UniProtKB-KW"/>
</dbReference>
<dbReference type="GO" id="GO:0009252">
    <property type="term" value="P:peptidoglycan biosynthetic process"/>
    <property type="evidence" value="ECO:0007669"/>
    <property type="project" value="UniProtKB-UniRule"/>
</dbReference>
<dbReference type="GO" id="GO:0008360">
    <property type="term" value="P:regulation of cell shape"/>
    <property type="evidence" value="ECO:0007669"/>
    <property type="project" value="UniProtKB-KW"/>
</dbReference>
<dbReference type="FunFam" id="3.30.1490.20:FF:000007">
    <property type="entry name" value="D-alanine--D-alanine ligase"/>
    <property type="match status" value="1"/>
</dbReference>
<dbReference type="FunFam" id="3.30.470.20:FF:000008">
    <property type="entry name" value="D-alanine--D-alanine ligase"/>
    <property type="match status" value="1"/>
</dbReference>
<dbReference type="FunFam" id="3.40.50.20:FF:000020">
    <property type="entry name" value="D-alanine--D-alanine ligase"/>
    <property type="match status" value="1"/>
</dbReference>
<dbReference type="Gene3D" id="3.40.50.20">
    <property type="match status" value="1"/>
</dbReference>
<dbReference type="Gene3D" id="3.30.1490.20">
    <property type="entry name" value="ATP-grasp fold, A domain"/>
    <property type="match status" value="1"/>
</dbReference>
<dbReference type="Gene3D" id="3.30.470.20">
    <property type="entry name" value="ATP-grasp fold, B domain"/>
    <property type="match status" value="1"/>
</dbReference>
<dbReference type="HAMAP" id="MF_00047">
    <property type="entry name" value="Dala_Dala_lig"/>
    <property type="match status" value="1"/>
</dbReference>
<dbReference type="InterPro" id="IPR011761">
    <property type="entry name" value="ATP-grasp"/>
</dbReference>
<dbReference type="InterPro" id="IPR013815">
    <property type="entry name" value="ATP_grasp_subdomain_1"/>
</dbReference>
<dbReference type="InterPro" id="IPR000291">
    <property type="entry name" value="D-Ala_lig_Van_CS"/>
</dbReference>
<dbReference type="InterPro" id="IPR005905">
    <property type="entry name" value="D_ala_D_ala"/>
</dbReference>
<dbReference type="InterPro" id="IPR011095">
    <property type="entry name" value="Dala_Dala_lig_C"/>
</dbReference>
<dbReference type="InterPro" id="IPR011127">
    <property type="entry name" value="Dala_Dala_lig_N"/>
</dbReference>
<dbReference type="InterPro" id="IPR016185">
    <property type="entry name" value="PreATP-grasp_dom_sf"/>
</dbReference>
<dbReference type="NCBIfam" id="TIGR01205">
    <property type="entry name" value="D_ala_D_alaTIGR"/>
    <property type="match status" value="1"/>
</dbReference>
<dbReference type="NCBIfam" id="NF002526">
    <property type="entry name" value="PRK01966.1-2"/>
    <property type="match status" value="1"/>
</dbReference>
<dbReference type="NCBIfam" id="NF002528">
    <property type="entry name" value="PRK01966.1-4"/>
    <property type="match status" value="1"/>
</dbReference>
<dbReference type="PANTHER" id="PTHR23132">
    <property type="entry name" value="D-ALANINE--D-ALANINE LIGASE"/>
    <property type="match status" value="1"/>
</dbReference>
<dbReference type="PANTHER" id="PTHR23132:SF25">
    <property type="entry name" value="D-ALANINE--D-ALANINE LIGASE A"/>
    <property type="match status" value="1"/>
</dbReference>
<dbReference type="Pfam" id="PF07478">
    <property type="entry name" value="Dala_Dala_lig_C"/>
    <property type="match status" value="1"/>
</dbReference>
<dbReference type="Pfam" id="PF01820">
    <property type="entry name" value="Dala_Dala_lig_N"/>
    <property type="match status" value="1"/>
</dbReference>
<dbReference type="PIRSF" id="PIRSF039102">
    <property type="entry name" value="Ddl/VanB"/>
    <property type="match status" value="1"/>
</dbReference>
<dbReference type="SUPFAM" id="SSF56059">
    <property type="entry name" value="Glutathione synthetase ATP-binding domain-like"/>
    <property type="match status" value="1"/>
</dbReference>
<dbReference type="SUPFAM" id="SSF52440">
    <property type="entry name" value="PreATP-grasp domain"/>
    <property type="match status" value="1"/>
</dbReference>
<dbReference type="PROSITE" id="PS50975">
    <property type="entry name" value="ATP_GRASP"/>
    <property type="match status" value="1"/>
</dbReference>
<dbReference type="PROSITE" id="PS00843">
    <property type="entry name" value="DALA_DALA_LIGASE_1"/>
    <property type="match status" value="1"/>
</dbReference>
<dbReference type="PROSITE" id="PS00844">
    <property type="entry name" value="DALA_DALA_LIGASE_2"/>
    <property type="match status" value="1"/>
</dbReference>
<name>DDL_STAAN</name>